<protein>
    <recommendedName>
        <fullName>Catenin alpha-3</fullName>
    </recommendedName>
    <alternativeName>
        <fullName>Alpha T-catenin</fullName>
    </alternativeName>
    <alternativeName>
        <fullName>Cadherin-associated protein</fullName>
    </alternativeName>
</protein>
<accession>Q65CL1</accession>
<accession>Q3UQ61</accession>
<accession>Q8C0N3</accession>
<organism>
    <name type="scientific">Mus musculus</name>
    <name type="common">Mouse</name>
    <dbReference type="NCBI Taxonomy" id="10090"/>
    <lineage>
        <taxon>Eukaryota</taxon>
        <taxon>Metazoa</taxon>
        <taxon>Chordata</taxon>
        <taxon>Craniata</taxon>
        <taxon>Vertebrata</taxon>
        <taxon>Euteleostomi</taxon>
        <taxon>Mammalia</taxon>
        <taxon>Eutheria</taxon>
        <taxon>Euarchontoglires</taxon>
        <taxon>Glires</taxon>
        <taxon>Rodentia</taxon>
        <taxon>Myomorpha</taxon>
        <taxon>Muroidea</taxon>
        <taxon>Muridae</taxon>
        <taxon>Murinae</taxon>
        <taxon>Mus</taxon>
        <taxon>Mus</taxon>
    </lineage>
</organism>
<name>CTNA3_MOUSE</name>
<dbReference type="EMBL" id="AF344871">
    <property type="protein sequence ID" value="AAQ14965.1"/>
    <property type="molecule type" value="mRNA"/>
</dbReference>
<dbReference type="EMBL" id="AK030166">
    <property type="protein sequence ID" value="BAC26817.1"/>
    <property type="molecule type" value="mRNA"/>
</dbReference>
<dbReference type="EMBL" id="AK142745">
    <property type="protein sequence ID" value="BAE25182.1"/>
    <property type="molecule type" value="mRNA"/>
</dbReference>
<dbReference type="CCDS" id="CCDS23901.1"/>
<dbReference type="RefSeq" id="NP_001157848.1">
    <property type="nucleotide sequence ID" value="NM_001164376.1"/>
</dbReference>
<dbReference type="RefSeq" id="NP_808280.2">
    <property type="nucleotide sequence ID" value="NM_177612.3"/>
</dbReference>
<dbReference type="RefSeq" id="XP_006513538.1">
    <property type="nucleotide sequence ID" value="XM_006513475.4"/>
</dbReference>
<dbReference type="SMR" id="Q65CL1"/>
<dbReference type="BioGRID" id="229691">
    <property type="interactions" value="3"/>
</dbReference>
<dbReference type="FunCoup" id="Q65CL1">
    <property type="interactions" value="262"/>
</dbReference>
<dbReference type="STRING" id="10090.ENSMUSP00000101080"/>
<dbReference type="GlyGen" id="Q65CL1">
    <property type="glycosylation" value="3 sites, 1 N-linked glycan (1 site), 1 O-linked glycan (2 sites)"/>
</dbReference>
<dbReference type="iPTMnet" id="Q65CL1"/>
<dbReference type="PhosphoSitePlus" id="Q65CL1"/>
<dbReference type="jPOST" id="Q65CL1"/>
<dbReference type="PaxDb" id="10090-ENSMUSP00000101080"/>
<dbReference type="ProteomicsDB" id="284056"/>
<dbReference type="Antibodypedia" id="2926">
    <property type="antibodies" value="192 antibodies from 30 providers"/>
</dbReference>
<dbReference type="DNASU" id="216033"/>
<dbReference type="Ensembl" id="ENSMUST00000075099.5">
    <property type="protein sequence ID" value="ENSMUSP00000074606.5"/>
    <property type="gene ID" value="ENSMUSG00000060843.12"/>
</dbReference>
<dbReference type="Ensembl" id="ENSMUST00000105440.8">
    <property type="protein sequence ID" value="ENSMUSP00000101080.2"/>
    <property type="gene ID" value="ENSMUSG00000060843.12"/>
</dbReference>
<dbReference type="Ensembl" id="ENSMUST00000105441.8">
    <property type="protein sequence ID" value="ENSMUSP00000101081.2"/>
    <property type="gene ID" value="ENSMUSG00000060843.12"/>
</dbReference>
<dbReference type="GeneID" id="216033"/>
<dbReference type="KEGG" id="mmu:216033"/>
<dbReference type="UCSC" id="uc007fkh.2">
    <property type="organism name" value="mouse"/>
</dbReference>
<dbReference type="AGR" id="MGI:2661445"/>
<dbReference type="CTD" id="29119"/>
<dbReference type="MGI" id="MGI:2661445">
    <property type="gene designation" value="Ctnna3"/>
</dbReference>
<dbReference type="VEuPathDB" id="HostDB:ENSMUSG00000060843"/>
<dbReference type="eggNOG" id="KOG3681">
    <property type="taxonomic scope" value="Eukaryota"/>
</dbReference>
<dbReference type="GeneTree" id="ENSGT01030000234543"/>
<dbReference type="HOGENOM" id="CLU_015314_2_0_1"/>
<dbReference type="InParanoid" id="Q65CL1"/>
<dbReference type="OMA" id="TWENYIH"/>
<dbReference type="OrthoDB" id="6376697at2759"/>
<dbReference type="PhylomeDB" id="Q65CL1"/>
<dbReference type="TreeFam" id="TF313686"/>
<dbReference type="BioGRID-ORCS" id="216033">
    <property type="hits" value="1 hit in 79 CRISPR screens"/>
</dbReference>
<dbReference type="ChiTaRS" id="Ctnna3">
    <property type="organism name" value="mouse"/>
</dbReference>
<dbReference type="PRO" id="PR:Q65CL1"/>
<dbReference type="Proteomes" id="UP000000589">
    <property type="component" value="Chromosome 10"/>
</dbReference>
<dbReference type="RNAct" id="Q65CL1">
    <property type="molecule type" value="protein"/>
</dbReference>
<dbReference type="Bgee" id="ENSMUSG00000060843">
    <property type="expression patterns" value="Expressed in interventricular septum and 60 other cell types or tissues"/>
</dbReference>
<dbReference type="GO" id="GO:0005912">
    <property type="term" value="C:adherens junction"/>
    <property type="evidence" value="ECO:0000314"/>
    <property type="project" value="MGI"/>
</dbReference>
<dbReference type="GO" id="GO:0005737">
    <property type="term" value="C:cytoplasm"/>
    <property type="evidence" value="ECO:0007669"/>
    <property type="project" value="UniProtKB-KW"/>
</dbReference>
<dbReference type="GO" id="GO:0005856">
    <property type="term" value="C:cytoskeleton"/>
    <property type="evidence" value="ECO:0007669"/>
    <property type="project" value="UniProtKB-SubCell"/>
</dbReference>
<dbReference type="GO" id="GO:0030057">
    <property type="term" value="C:desmosome"/>
    <property type="evidence" value="ECO:0007669"/>
    <property type="project" value="UniProtKB-SubCell"/>
</dbReference>
<dbReference type="GO" id="GO:0005916">
    <property type="term" value="C:fascia adherens"/>
    <property type="evidence" value="ECO:0000314"/>
    <property type="project" value="MGI"/>
</dbReference>
<dbReference type="GO" id="GO:0030027">
    <property type="term" value="C:lamellipodium"/>
    <property type="evidence" value="ECO:0000314"/>
    <property type="project" value="MGI"/>
</dbReference>
<dbReference type="GO" id="GO:0051015">
    <property type="term" value="F:actin filament binding"/>
    <property type="evidence" value="ECO:0007669"/>
    <property type="project" value="InterPro"/>
</dbReference>
<dbReference type="GO" id="GO:0008013">
    <property type="term" value="F:beta-catenin binding"/>
    <property type="evidence" value="ECO:0007669"/>
    <property type="project" value="Ensembl"/>
</dbReference>
<dbReference type="GO" id="GO:0045296">
    <property type="term" value="F:cadherin binding"/>
    <property type="evidence" value="ECO:0000304"/>
    <property type="project" value="UniProtKB"/>
</dbReference>
<dbReference type="GO" id="GO:0086073">
    <property type="term" value="P:bundle of His cell-Purkinje myocyte adhesion involved in cell communication"/>
    <property type="evidence" value="ECO:0007669"/>
    <property type="project" value="Ensembl"/>
</dbReference>
<dbReference type="GO" id="GO:0098609">
    <property type="term" value="P:cell-cell adhesion"/>
    <property type="evidence" value="ECO:0000314"/>
    <property type="project" value="UniProtKB"/>
</dbReference>
<dbReference type="GO" id="GO:0086091">
    <property type="term" value="P:regulation of heart rate by cardiac conduction"/>
    <property type="evidence" value="ECO:0007669"/>
    <property type="project" value="Ensembl"/>
</dbReference>
<dbReference type="GO" id="GO:0098911">
    <property type="term" value="P:regulation of ventricular cardiac muscle cell action potential"/>
    <property type="evidence" value="ECO:0007669"/>
    <property type="project" value="Ensembl"/>
</dbReference>
<dbReference type="FunFam" id="1.20.120.230:FF:000007">
    <property type="entry name" value="Catenin alpha 1"/>
    <property type="match status" value="1"/>
</dbReference>
<dbReference type="FunFam" id="1.20.120.230:FF:000011">
    <property type="entry name" value="Catenin alpha 1"/>
    <property type="match status" value="1"/>
</dbReference>
<dbReference type="Gene3D" id="6.10.250.2510">
    <property type="match status" value="1"/>
</dbReference>
<dbReference type="Gene3D" id="1.20.120.230">
    <property type="entry name" value="Alpha-catenin/vinculin-like"/>
    <property type="match status" value="5"/>
</dbReference>
<dbReference type="InterPro" id="IPR036723">
    <property type="entry name" value="Alpha-catenin/vinculin-like_sf"/>
</dbReference>
<dbReference type="InterPro" id="IPR001033">
    <property type="entry name" value="Alpha_catenin"/>
</dbReference>
<dbReference type="InterPro" id="IPR006077">
    <property type="entry name" value="Vinculin/catenin"/>
</dbReference>
<dbReference type="PANTHER" id="PTHR18914">
    <property type="entry name" value="ALPHA CATENIN"/>
    <property type="match status" value="1"/>
</dbReference>
<dbReference type="PANTHER" id="PTHR18914:SF21">
    <property type="entry name" value="CATENIN ALPHA-3"/>
    <property type="match status" value="1"/>
</dbReference>
<dbReference type="Pfam" id="PF01044">
    <property type="entry name" value="Vinculin"/>
    <property type="match status" value="1"/>
</dbReference>
<dbReference type="PRINTS" id="PR00805">
    <property type="entry name" value="ALPHACATENIN"/>
</dbReference>
<dbReference type="SUPFAM" id="SSF47220">
    <property type="entry name" value="alpha-catenin/vinculin-like"/>
    <property type="match status" value="4"/>
</dbReference>
<keyword id="KW-0130">Cell adhesion</keyword>
<keyword id="KW-0965">Cell junction</keyword>
<keyword id="KW-0175">Coiled coil</keyword>
<keyword id="KW-0963">Cytoplasm</keyword>
<keyword id="KW-0206">Cytoskeleton</keyword>
<keyword id="KW-0597">Phosphoprotein</keyword>
<keyword id="KW-1185">Reference proteome</keyword>
<reference evidence="9" key="1">
    <citation type="journal article" date="2003" name="Hum. Genet.">
        <title>Assessment of the CTNNA3 gene encoding human alpha T-catenin regarding its involvement in dilated cardiomyopathy.</title>
        <authorList>
            <person name="Janssens B."/>
            <person name="Mohapatra B."/>
            <person name="Vatta M."/>
            <person name="Goossens S."/>
            <person name="Vanpoucke G."/>
            <person name="Kools P."/>
            <person name="Montoye T."/>
            <person name="van Hengel J."/>
            <person name="Bowles N.E."/>
            <person name="van Roy F."/>
            <person name="Towbin J.A."/>
        </authorList>
    </citation>
    <scope>NUCLEOTIDE SEQUENCE [MRNA]</scope>
    <source>
        <tissue evidence="6">Heart</tissue>
    </source>
</reference>
<reference evidence="10" key="2">
    <citation type="journal article" date="2005" name="Science">
        <title>The transcriptional landscape of the mammalian genome.</title>
        <authorList>
            <person name="Carninci P."/>
            <person name="Kasukawa T."/>
            <person name="Katayama S."/>
            <person name="Gough J."/>
            <person name="Frith M.C."/>
            <person name="Maeda N."/>
            <person name="Oyama R."/>
            <person name="Ravasi T."/>
            <person name="Lenhard B."/>
            <person name="Wells C."/>
            <person name="Kodzius R."/>
            <person name="Shimokawa K."/>
            <person name="Bajic V.B."/>
            <person name="Brenner S.E."/>
            <person name="Batalov S."/>
            <person name="Forrest A.R."/>
            <person name="Zavolan M."/>
            <person name="Davis M.J."/>
            <person name="Wilming L.G."/>
            <person name="Aidinis V."/>
            <person name="Allen J.E."/>
            <person name="Ambesi-Impiombato A."/>
            <person name="Apweiler R."/>
            <person name="Aturaliya R.N."/>
            <person name="Bailey T.L."/>
            <person name="Bansal M."/>
            <person name="Baxter L."/>
            <person name="Beisel K.W."/>
            <person name="Bersano T."/>
            <person name="Bono H."/>
            <person name="Chalk A.M."/>
            <person name="Chiu K.P."/>
            <person name="Choudhary V."/>
            <person name="Christoffels A."/>
            <person name="Clutterbuck D.R."/>
            <person name="Crowe M.L."/>
            <person name="Dalla E."/>
            <person name="Dalrymple B.P."/>
            <person name="de Bono B."/>
            <person name="Della Gatta G."/>
            <person name="di Bernardo D."/>
            <person name="Down T."/>
            <person name="Engstrom P."/>
            <person name="Fagiolini M."/>
            <person name="Faulkner G."/>
            <person name="Fletcher C.F."/>
            <person name="Fukushima T."/>
            <person name="Furuno M."/>
            <person name="Futaki S."/>
            <person name="Gariboldi M."/>
            <person name="Georgii-Hemming P."/>
            <person name="Gingeras T.R."/>
            <person name="Gojobori T."/>
            <person name="Green R.E."/>
            <person name="Gustincich S."/>
            <person name="Harbers M."/>
            <person name="Hayashi Y."/>
            <person name="Hensch T.K."/>
            <person name="Hirokawa N."/>
            <person name="Hill D."/>
            <person name="Huminiecki L."/>
            <person name="Iacono M."/>
            <person name="Ikeo K."/>
            <person name="Iwama A."/>
            <person name="Ishikawa T."/>
            <person name="Jakt M."/>
            <person name="Kanapin A."/>
            <person name="Katoh M."/>
            <person name="Kawasawa Y."/>
            <person name="Kelso J."/>
            <person name="Kitamura H."/>
            <person name="Kitano H."/>
            <person name="Kollias G."/>
            <person name="Krishnan S.P."/>
            <person name="Kruger A."/>
            <person name="Kummerfeld S.K."/>
            <person name="Kurochkin I.V."/>
            <person name="Lareau L.F."/>
            <person name="Lazarevic D."/>
            <person name="Lipovich L."/>
            <person name="Liu J."/>
            <person name="Liuni S."/>
            <person name="McWilliam S."/>
            <person name="Madan Babu M."/>
            <person name="Madera M."/>
            <person name="Marchionni L."/>
            <person name="Matsuda H."/>
            <person name="Matsuzawa S."/>
            <person name="Miki H."/>
            <person name="Mignone F."/>
            <person name="Miyake S."/>
            <person name="Morris K."/>
            <person name="Mottagui-Tabar S."/>
            <person name="Mulder N."/>
            <person name="Nakano N."/>
            <person name="Nakauchi H."/>
            <person name="Ng P."/>
            <person name="Nilsson R."/>
            <person name="Nishiguchi S."/>
            <person name="Nishikawa S."/>
            <person name="Nori F."/>
            <person name="Ohara O."/>
            <person name="Okazaki Y."/>
            <person name="Orlando V."/>
            <person name="Pang K.C."/>
            <person name="Pavan W.J."/>
            <person name="Pavesi G."/>
            <person name="Pesole G."/>
            <person name="Petrovsky N."/>
            <person name="Piazza S."/>
            <person name="Reed J."/>
            <person name="Reid J.F."/>
            <person name="Ring B.Z."/>
            <person name="Ringwald M."/>
            <person name="Rost B."/>
            <person name="Ruan Y."/>
            <person name="Salzberg S.L."/>
            <person name="Sandelin A."/>
            <person name="Schneider C."/>
            <person name="Schoenbach C."/>
            <person name="Sekiguchi K."/>
            <person name="Semple C.A."/>
            <person name="Seno S."/>
            <person name="Sessa L."/>
            <person name="Sheng Y."/>
            <person name="Shibata Y."/>
            <person name="Shimada H."/>
            <person name="Shimada K."/>
            <person name="Silva D."/>
            <person name="Sinclair B."/>
            <person name="Sperling S."/>
            <person name="Stupka E."/>
            <person name="Sugiura K."/>
            <person name="Sultana R."/>
            <person name="Takenaka Y."/>
            <person name="Taki K."/>
            <person name="Tammoja K."/>
            <person name="Tan S.L."/>
            <person name="Tang S."/>
            <person name="Taylor M.S."/>
            <person name="Tegner J."/>
            <person name="Teichmann S.A."/>
            <person name="Ueda H.R."/>
            <person name="van Nimwegen E."/>
            <person name="Verardo R."/>
            <person name="Wei C.L."/>
            <person name="Yagi K."/>
            <person name="Yamanishi H."/>
            <person name="Zabarovsky E."/>
            <person name="Zhu S."/>
            <person name="Zimmer A."/>
            <person name="Hide W."/>
            <person name="Bult C."/>
            <person name="Grimmond S.M."/>
            <person name="Teasdale R.D."/>
            <person name="Liu E.T."/>
            <person name="Brusic V."/>
            <person name="Quackenbush J."/>
            <person name="Wahlestedt C."/>
            <person name="Mattick J.S."/>
            <person name="Hume D.A."/>
            <person name="Kai C."/>
            <person name="Sasaki D."/>
            <person name="Tomaru Y."/>
            <person name="Fukuda S."/>
            <person name="Kanamori-Katayama M."/>
            <person name="Suzuki M."/>
            <person name="Aoki J."/>
            <person name="Arakawa T."/>
            <person name="Iida J."/>
            <person name="Imamura K."/>
            <person name="Itoh M."/>
            <person name="Kato T."/>
            <person name="Kawaji H."/>
            <person name="Kawagashira N."/>
            <person name="Kawashima T."/>
            <person name="Kojima M."/>
            <person name="Kondo S."/>
            <person name="Konno H."/>
            <person name="Nakano K."/>
            <person name="Ninomiya N."/>
            <person name="Nishio T."/>
            <person name="Okada M."/>
            <person name="Plessy C."/>
            <person name="Shibata K."/>
            <person name="Shiraki T."/>
            <person name="Suzuki S."/>
            <person name="Tagami M."/>
            <person name="Waki K."/>
            <person name="Watahiki A."/>
            <person name="Okamura-Oho Y."/>
            <person name="Suzuki H."/>
            <person name="Kawai J."/>
            <person name="Hayashizaki Y."/>
        </authorList>
    </citation>
    <scope>NUCLEOTIDE SEQUENCE [LARGE SCALE MRNA]</scope>
    <source>
        <strain evidence="10">C57BL/6J</strain>
        <tissue>Heart</tissue>
        <tissue evidence="10">Testis</tissue>
    </source>
</reference>
<reference evidence="8" key="3">
    <citation type="journal article" date="2001" name="J. Cell Sci.">
        <title>AlphaT-catenin: a novel tissue-specific beta-catenin-binding protein mediating strong cell-cell adhesion.</title>
        <authorList>
            <person name="Janssens B."/>
            <person name="Goossens S."/>
            <person name="Staes K."/>
            <person name="Gilbert B."/>
            <person name="van Hengel J."/>
            <person name="Colpaert C."/>
            <person name="Bruyneel E."/>
            <person name="Mareel M."/>
            <person name="van Roy F."/>
        </authorList>
    </citation>
    <scope>INTERACTION WITH CTNNB1</scope>
</reference>
<reference key="4">
    <citation type="journal article" date="2006" name="Mol. Cell. Proteomics">
        <title>Comprehensive identification of phosphorylation sites in postsynaptic density preparations.</title>
        <authorList>
            <person name="Trinidad J.C."/>
            <person name="Specht C.G."/>
            <person name="Thalhammer A."/>
            <person name="Schoepfer R."/>
            <person name="Burlingame A.L."/>
        </authorList>
    </citation>
    <scope>PHOSPHORYLATION [LARGE SCALE ANALYSIS] AT SER-637</scope>
    <scope>IDENTIFICATION BY MASS SPECTROMETRY [LARGE SCALE ANALYSIS]</scope>
    <source>
        <tissue>Brain</tissue>
    </source>
</reference>
<reference key="5">
    <citation type="journal article" date="2007" name="J. Cell Sci.">
        <title>A unique and specific interaction between alphaT-catenin and plakophilin-2 in the area composita, the mixed-type junctional structure of cardiac intercalated discs.</title>
        <authorList>
            <person name="Goossens S."/>
            <person name="Janssens B."/>
            <person name="Bonne S."/>
            <person name="De Rycke R."/>
            <person name="Braet F."/>
            <person name="van Hengel J."/>
            <person name="van Roy F."/>
        </authorList>
    </citation>
    <scope>SUBCELLULAR LOCATION</scope>
    <scope>TISSUE SPECIFICITY</scope>
</reference>
<reference key="6">
    <citation type="journal article" date="2010" name="Cell">
        <title>A tissue-specific atlas of mouse protein phosphorylation and expression.</title>
        <authorList>
            <person name="Huttlin E.L."/>
            <person name="Jedrychowski M.P."/>
            <person name="Elias J.E."/>
            <person name="Goswami T."/>
            <person name="Rad R."/>
            <person name="Beausoleil S.A."/>
            <person name="Villen J."/>
            <person name="Haas W."/>
            <person name="Sowa M.E."/>
            <person name="Gygi S.P."/>
        </authorList>
    </citation>
    <scope>PHOSPHORYLATION [LARGE SCALE ANALYSIS] AT SER-160; THR-361; SER-637; SER-647 AND THR-649</scope>
    <scope>IDENTIFICATION BY MASS SPECTROMETRY [LARGE SCALE ANALYSIS]</scope>
    <source>
        <tissue>Brain</tissue>
        <tissue>Heart</tissue>
        <tissue>Lung</tissue>
        <tissue>Spleen</tissue>
        <tissue>Testis</tissue>
    </source>
</reference>
<sequence>MSAETPITLNMDTQDLQIQTFTVEKLLEPLIIQVTTLVNCPQNPSNRKKGRSKRARVLLASVEEATWNLLDKGEMIAKEATVLKEELAAALQEVRKESKALKVSAERFTDDPCYLPKREAVVQAARALLAAVTRLLVLADMIDVMCLLQHVSSFQRTFESLKNVSNKSDLQRTYQKLGKELESLDYLAFKRQQDLKSPSQRDEIAGARATLKENSPLLHSICSACLEHSDVASLKASKDTVCEEIQNALDVISNASQGIQNAPAPPEPQAATLGSAFDELENLIVLNPLTVTEEDVRPSLEKRLEAIISGAALLADSSCTRDLHRERIIAECNAIRQALQDLLTEYMSNTGKTERSNTLNTAIVNMSKKTRDLRRQLRKAIIDHISDSFLDTTVPLLVLIEAAKNGRVKEIKDYAAIFHEHTGRLVEVANLACSMSTNEDGIKIVRIAANHLETLCPQIINAALALASRPKSQVVKNTMEMYKRTWEHYIHVLTEAVDDITSIDDFLAVSESHILEDVNKCIIALRDQDADNLDRAAGAIRGRAARVAHIVAGEMDSYEPGAYTEGVMRNVNFLTSTVIPEFVTQVNVALDALSKNSLTALDDNQFVDISKKIYDTIHDIRCSVMMIRTPEELEDVSDLEDDHEVRSHTSIQTEGKTDRAKMTQLPEAEKEKIAEQVADFKKVKSKLDAEIEIWDDTSNDIIVLAKKMCMIMMEMTDFTRGKGPLKHTTDVIYAAKMISESGSRMDVLARQIANQCPDPPCKQDLLAYLEQIKFYSHQLKICSQVKAEIQNLGGELIVSALDSVTSLIQAAKNLMNAVVQTVKMSYIASTKIIRIQSSAGPRHPVVMWRMKAPAKKPLIKREKPEETWAAVRRGSAKKKIHPVQVMSEFRGRQVY</sequence>
<gene>
    <name evidence="11" type="primary">Ctnna3</name>
    <name evidence="11" type="synonym">Catna3</name>
</gene>
<evidence type="ECO:0000250" key="1"/>
<evidence type="ECO:0000250" key="2">
    <source>
        <dbReference type="UniProtKB" id="Q9UI47"/>
    </source>
</evidence>
<evidence type="ECO:0000255" key="3"/>
<evidence type="ECO:0000256" key="4">
    <source>
        <dbReference type="SAM" id="MobiDB-lite"/>
    </source>
</evidence>
<evidence type="ECO:0000269" key="5">
    <source>
    </source>
</evidence>
<evidence type="ECO:0000269" key="6">
    <source>
    </source>
</evidence>
<evidence type="ECO:0000269" key="7">
    <source>
    </source>
</evidence>
<evidence type="ECO:0000305" key="8"/>
<evidence type="ECO:0000312" key="9">
    <source>
        <dbReference type="EMBL" id="AAQ14965.1"/>
    </source>
</evidence>
<evidence type="ECO:0000312" key="10">
    <source>
        <dbReference type="EMBL" id="BAC26817.1"/>
    </source>
</evidence>
<evidence type="ECO:0000312" key="11">
    <source>
        <dbReference type="MGI" id="MGI:2661445"/>
    </source>
</evidence>
<evidence type="ECO:0007744" key="12">
    <source>
    </source>
</evidence>
<evidence type="ECO:0007744" key="13">
    <source>
    </source>
</evidence>
<proteinExistence type="evidence at protein level"/>
<feature type="chain" id="PRO_0000064267" description="Catenin alpha-3">
    <location>
        <begin position="1"/>
        <end position="895"/>
    </location>
</feature>
<feature type="region of interest" description="Disordered" evidence="4">
    <location>
        <begin position="635"/>
        <end position="660"/>
    </location>
</feature>
<feature type="coiled-coil region" evidence="3">
    <location>
        <begin position="74"/>
        <end position="107"/>
    </location>
</feature>
<feature type="coiled-coil region" evidence="3">
    <location>
        <begin position="325"/>
        <end position="379"/>
    </location>
</feature>
<feature type="modified residue" description="Phosphoserine" evidence="13">
    <location>
        <position position="160"/>
    </location>
</feature>
<feature type="modified residue" description="Phosphothreonine" evidence="13">
    <location>
        <position position="361"/>
    </location>
</feature>
<feature type="modified residue" description="Phosphoserine" evidence="12 13">
    <location>
        <position position="637"/>
    </location>
</feature>
<feature type="modified residue" description="Phosphoserine" evidence="13">
    <location>
        <position position="647"/>
    </location>
</feature>
<feature type="modified residue" description="Phosphothreonine" evidence="13">
    <location>
        <position position="649"/>
    </location>
</feature>
<feature type="sequence conflict" description="In Ref. 2; BAC26817." evidence="8" ref="2">
    <original>E</original>
    <variation>K</variation>
    <location>
        <position position="439"/>
    </location>
</feature>
<feature type="sequence conflict" description="In Ref. 2; BAC26817." evidence="8" ref="2">
    <original>S</original>
    <variation>C</variation>
    <location>
        <position position="838"/>
    </location>
</feature>
<feature type="sequence conflict" description="In Ref. 2; BAC26817." evidence="8" ref="2">
    <original>A</original>
    <variation>V</variation>
    <location>
        <position position="869"/>
    </location>
</feature>
<feature type="sequence conflict" description="In Ref. 1; AAQ14965." evidence="8" ref="1">
    <original>V</original>
    <variation>A</variation>
    <location>
        <position position="871"/>
    </location>
</feature>
<comment type="function">
    <text evidence="2">May be involved in formation of stretch-resistant cell-cell adhesion complexes.</text>
</comment>
<comment type="subunit">
    <text evidence="2 5">Interacts with CTNNB1 (PubMed:11590244). Interacts with PKP2 (By similarity).</text>
</comment>
<comment type="subcellular location">
    <subcellularLocation>
        <location evidence="1">Cytoplasm</location>
        <location evidence="1">Cytoskeleton</location>
    </subcellularLocation>
    <subcellularLocation>
        <location evidence="7">Cell junction</location>
        <location evidence="7">Desmosome</location>
    </subcellularLocation>
    <text evidence="1 7">Localizes to intercalated disks of cardiomyocytes and in peritubular myoid cells of testis, and colocalizes with CTNNA1 and CTNNA2. Colocalizes with PKP2 at intercalated disks in the heart (PubMed:17535849).</text>
</comment>
<comment type="tissue specificity">
    <text evidence="7">Expressed in heart (at protein level).</text>
</comment>
<comment type="similarity">
    <text evidence="3">Belongs to the vinculin/alpha-catenin family.</text>
</comment>